<evidence type="ECO:0000255" key="1">
    <source>
        <dbReference type="HAMAP-Rule" id="MF_00104"/>
    </source>
</evidence>
<evidence type="ECO:0000256" key="2">
    <source>
        <dbReference type="SAM" id="MobiDB-lite"/>
    </source>
</evidence>
<dbReference type="EC" id="3.1.26.3" evidence="1"/>
<dbReference type="EMBL" id="CP000705">
    <property type="protein sequence ID" value="ABQ83416.1"/>
    <property type="molecule type" value="Genomic_DNA"/>
</dbReference>
<dbReference type="RefSeq" id="WP_003663822.1">
    <property type="nucleotide sequence ID" value="NZ_AZDD01000001.1"/>
</dbReference>
<dbReference type="SMR" id="A5VKP2"/>
<dbReference type="STRING" id="557436.Lreu_1159"/>
<dbReference type="GeneID" id="77191828"/>
<dbReference type="KEGG" id="lre:Lreu_1159"/>
<dbReference type="PATRIC" id="fig|557436.17.peg.25"/>
<dbReference type="eggNOG" id="COG0571">
    <property type="taxonomic scope" value="Bacteria"/>
</dbReference>
<dbReference type="HOGENOM" id="CLU_000907_1_3_9"/>
<dbReference type="Proteomes" id="UP000001991">
    <property type="component" value="Chromosome"/>
</dbReference>
<dbReference type="GO" id="GO:0005737">
    <property type="term" value="C:cytoplasm"/>
    <property type="evidence" value="ECO:0007669"/>
    <property type="project" value="UniProtKB-SubCell"/>
</dbReference>
<dbReference type="GO" id="GO:0003725">
    <property type="term" value="F:double-stranded RNA binding"/>
    <property type="evidence" value="ECO:0007669"/>
    <property type="project" value="TreeGrafter"/>
</dbReference>
<dbReference type="GO" id="GO:0046872">
    <property type="term" value="F:metal ion binding"/>
    <property type="evidence" value="ECO:0007669"/>
    <property type="project" value="UniProtKB-KW"/>
</dbReference>
<dbReference type="GO" id="GO:0004525">
    <property type="term" value="F:ribonuclease III activity"/>
    <property type="evidence" value="ECO:0007669"/>
    <property type="project" value="UniProtKB-UniRule"/>
</dbReference>
<dbReference type="GO" id="GO:0019843">
    <property type="term" value="F:rRNA binding"/>
    <property type="evidence" value="ECO:0007669"/>
    <property type="project" value="UniProtKB-KW"/>
</dbReference>
<dbReference type="GO" id="GO:0006397">
    <property type="term" value="P:mRNA processing"/>
    <property type="evidence" value="ECO:0007669"/>
    <property type="project" value="UniProtKB-UniRule"/>
</dbReference>
<dbReference type="GO" id="GO:0010468">
    <property type="term" value="P:regulation of gene expression"/>
    <property type="evidence" value="ECO:0007669"/>
    <property type="project" value="TreeGrafter"/>
</dbReference>
<dbReference type="GO" id="GO:0006364">
    <property type="term" value="P:rRNA processing"/>
    <property type="evidence" value="ECO:0007669"/>
    <property type="project" value="UniProtKB-UniRule"/>
</dbReference>
<dbReference type="GO" id="GO:0008033">
    <property type="term" value="P:tRNA processing"/>
    <property type="evidence" value="ECO:0007669"/>
    <property type="project" value="UniProtKB-KW"/>
</dbReference>
<dbReference type="CDD" id="cd10845">
    <property type="entry name" value="DSRM_RNAse_III_family"/>
    <property type="match status" value="1"/>
</dbReference>
<dbReference type="CDD" id="cd00593">
    <property type="entry name" value="RIBOc"/>
    <property type="match status" value="1"/>
</dbReference>
<dbReference type="FunFam" id="1.10.1520.10:FF:000001">
    <property type="entry name" value="Ribonuclease 3"/>
    <property type="match status" value="1"/>
</dbReference>
<dbReference type="FunFam" id="3.30.160.20:FF:000003">
    <property type="entry name" value="Ribonuclease 3"/>
    <property type="match status" value="1"/>
</dbReference>
<dbReference type="Gene3D" id="3.30.160.20">
    <property type="match status" value="1"/>
</dbReference>
<dbReference type="Gene3D" id="1.10.1520.10">
    <property type="entry name" value="Ribonuclease III domain"/>
    <property type="match status" value="1"/>
</dbReference>
<dbReference type="HAMAP" id="MF_00104">
    <property type="entry name" value="RNase_III"/>
    <property type="match status" value="1"/>
</dbReference>
<dbReference type="InterPro" id="IPR014720">
    <property type="entry name" value="dsRBD_dom"/>
</dbReference>
<dbReference type="InterPro" id="IPR011907">
    <property type="entry name" value="RNase_III"/>
</dbReference>
<dbReference type="InterPro" id="IPR000999">
    <property type="entry name" value="RNase_III_dom"/>
</dbReference>
<dbReference type="InterPro" id="IPR036389">
    <property type="entry name" value="RNase_III_sf"/>
</dbReference>
<dbReference type="NCBIfam" id="TIGR02191">
    <property type="entry name" value="RNaseIII"/>
    <property type="match status" value="1"/>
</dbReference>
<dbReference type="PANTHER" id="PTHR11207:SF0">
    <property type="entry name" value="RIBONUCLEASE 3"/>
    <property type="match status" value="1"/>
</dbReference>
<dbReference type="PANTHER" id="PTHR11207">
    <property type="entry name" value="RIBONUCLEASE III"/>
    <property type="match status" value="1"/>
</dbReference>
<dbReference type="Pfam" id="PF00035">
    <property type="entry name" value="dsrm"/>
    <property type="match status" value="1"/>
</dbReference>
<dbReference type="Pfam" id="PF14622">
    <property type="entry name" value="Ribonucleas_3_3"/>
    <property type="match status" value="1"/>
</dbReference>
<dbReference type="SMART" id="SM00358">
    <property type="entry name" value="DSRM"/>
    <property type="match status" value="1"/>
</dbReference>
<dbReference type="SMART" id="SM00535">
    <property type="entry name" value="RIBOc"/>
    <property type="match status" value="1"/>
</dbReference>
<dbReference type="SUPFAM" id="SSF54768">
    <property type="entry name" value="dsRNA-binding domain-like"/>
    <property type="match status" value="1"/>
</dbReference>
<dbReference type="SUPFAM" id="SSF69065">
    <property type="entry name" value="RNase III domain-like"/>
    <property type="match status" value="1"/>
</dbReference>
<dbReference type="PROSITE" id="PS50137">
    <property type="entry name" value="DS_RBD"/>
    <property type="match status" value="1"/>
</dbReference>
<dbReference type="PROSITE" id="PS50142">
    <property type="entry name" value="RNASE_3_2"/>
    <property type="match status" value="1"/>
</dbReference>
<comment type="function">
    <text evidence="1">Digests double-stranded RNA. Involved in the processing of primary rRNA transcript to yield the immediate precursors to the large and small rRNAs (23S and 16S). Processes some mRNAs, and tRNAs when they are encoded in the rRNA operon. Processes pre-crRNA and tracrRNA of type II CRISPR loci if present in the organism.</text>
</comment>
<comment type="catalytic activity">
    <reaction evidence="1">
        <text>Endonucleolytic cleavage to 5'-phosphomonoester.</text>
        <dbReference type="EC" id="3.1.26.3"/>
    </reaction>
</comment>
<comment type="cofactor">
    <cofactor evidence="1">
        <name>Mg(2+)</name>
        <dbReference type="ChEBI" id="CHEBI:18420"/>
    </cofactor>
</comment>
<comment type="subunit">
    <text evidence="1">Homodimer.</text>
</comment>
<comment type="subcellular location">
    <subcellularLocation>
        <location evidence="1">Cytoplasm</location>
    </subcellularLocation>
</comment>
<comment type="similarity">
    <text evidence="1">Belongs to the ribonuclease III family.</text>
</comment>
<name>RNC_LIMRD</name>
<keyword id="KW-0963">Cytoplasm</keyword>
<keyword id="KW-0255">Endonuclease</keyword>
<keyword id="KW-0378">Hydrolase</keyword>
<keyword id="KW-0460">Magnesium</keyword>
<keyword id="KW-0479">Metal-binding</keyword>
<keyword id="KW-0507">mRNA processing</keyword>
<keyword id="KW-0540">Nuclease</keyword>
<keyword id="KW-1185">Reference proteome</keyword>
<keyword id="KW-0694">RNA-binding</keyword>
<keyword id="KW-0698">rRNA processing</keyword>
<keyword id="KW-0699">rRNA-binding</keyword>
<keyword id="KW-0819">tRNA processing</keyword>
<reference key="1">
    <citation type="journal article" date="2011" name="PLoS Genet.">
        <title>The evolution of host specialization in the vertebrate gut symbiont Lactobacillus reuteri.</title>
        <authorList>
            <person name="Frese S.A."/>
            <person name="Benson A.K."/>
            <person name="Tannock G.W."/>
            <person name="Loach D.M."/>
            <person name="Kim J."/>
            <person name="Zhang M."/>
            <person name="Oh P.L."/>
            <person name="Heng N.C."/>
            <person name="Patil P.B."/>
            <person name="Juge N."/>
            <person name="Mackenzie D.A."/>
            <person name="Pearson B.M."/>
            <person name="Lapidus A."/>
            <person name="Dalin E."/>
            <person name="Tice H."/>
            <person name="Goltsman E."/>
            <person name="Land M."/>
            <person name="Hauser L."/>
            <person name="Ivanova N."/>
            <person name="Kyrpides N.C."/>
            <person name="Walter J."/>
        </authorList>
    </citation>
    <scope>NUCLEOTIDE SEQUENCE [LARGE SCALE GENOMIC DNA]</scope>
    <source>
        <strain>DSM 20016</strain>
    </source>
</reference>
<gene>
    <name evidence="1" type="primary">rnc</name>
    <name type="ordered locus">Lreu_1159</name>
</gene>
<feature type="chain" id="PRO_1000075770" description="Ribonuclease 3">
    <location>
        <begin position="1"/>
        <end position="233"/>
    </location>
</feature>
<feature type="domain" description="RNase III" evidence="1">
    <location>
        <begin position="6"/>
        <end position="135"/>
    </location>
</feature>
<feature type="domain" description="DRBM" evidence="1">
    <location>
        <begin position="161"/>
        <end position="230"/>
    </location>
</feature>
<feature type="region of interest" description="Disordered" evidence="2">
    <location>
        <begin position="205"/>
        <end position="233"/>
    </location>
</feature>
<feature type="active site" evidence="1">
    <location>
        <position position="52"/>
    </location>
</feature>
<feature type="active site" evidence="1">
    <location>
        <position position="124"/>
    </location>
</feature>
<feature type="binding site" evidence="1">
    <location>
        <position position="48"/>
    </location>
    <ligand>
        <name>Mg(2+)</name>
        <dbReference type="ChEBI" id="CHEBI:18420"/>
    </ligand>
</feature>
<feature type="binding site" evidence="1">
    <location>
        <position position="121"/>
    </location>
    <ligand>
        <name>Mg(2+)</name>
        <dbReference type="ChEBI" id="CHEBI:18420"/>
    </ligand>
</feature>
<feature type="binding site" evidence="1">
    <location>
        <position position="124"/>
    </location>
    <ligand>
        <name>Mg(2+)</name>
        <dbReference type="ChEBI" id="CHEBI:18420"/>
    </ligand>
</feature>
<proteinExistence type="inferred from homology"/>
<protein>
    <recommendedName>
        <fullName evidence="1">Ribonuclease 3</fullName>
        <ecNumber evidence="1">3.1.26.3</ecNumber>
    </recommendedName>
    <alternativeName>
        <fullName evidence="1">Ribonuclease III</fullName>
        <shortName evidence="1">RNase III</shortName>
    </alternativeName>
</protein>
<sequence length="233" mass="26606">MIEELQDYLAKEFNIHFDNPALLAEAFTQASYVNEHPNQGLKYYERIEFLGDAVLELIVSEYIYKRFPELPQGKLTRLRAAMVCEDSFSKFAKECHFDQYIRLGHGEEMAGARERPGLLCDIFESFIGALYLDQGRPAVEKFVQRVIFPKLDMGWFDHAVDAKTSLQEFLQRDGDIAIEYHLVEESGTENDPEFKVNVTANGDVIGEGKGSSKKHAEMQAAQQALDNMRNKNK</sequence>
<accession>A5VKP2</accession>
<organism>
    <name type="scientific">Limosilactobacillus reuteri (strain DSM 20016)</name>
    <name type="common">Lactobacillus reuteri</name>
    <dbReference type="NCBI Taxonomy" id="557436"/>
    <lineage>
        <taxon>Bacteria</taxon>
        <taxon>Bacillati</taxon>
        <taxon>Bacillota</taxon>
        <taxon>Bacilli</taxon>
        <taxon>Lactobacillales</taxon>
        <taxon>Lactobacillaceae</taxon>
        <taxon>Limosilactobacillus</taxon>
    </lineage>
</organism>